<gene>
    <name evidence="1" type="primary">torD</name>
    <name type="ordered locus">VV1_2139</name>
</gene>
<evidence type="ECO:0000255" key="1">
    <source>
        <dbReference type="HAMAP-Rule" id="MF_01150"/>
    </source>
</evidence>
<dbReference type="EMBL" id="AE016795">
    <property type="protein sequence ID" value="AAO10524.2"/>
    <property type="molecule type" value="Genomic_DNA"/>
</dbReference>
<dbReference type="RefSeq" id="WP_011080018.1">
    <property type="nucleotide sequence ID" value="NC_004459.3"/>
</dbReference>
<dbReference type="SMR" id="Q8DAQ4"/>
<dbReference type="KEGG" id="vvu:VV1_2139"/>
<dbReference type="HOGENOM" id="CLU_077650_4_0_6"/>
<dbReference type="Proteomes" id="UP000002275">
    <property type="component" value="Chromosome 1"/>
</dbReference>
<dbReference type="GO" id="GO:0005737">
    <property type="term" value="C:cytoplasm"/>
    <property type="evidence" value="ECO:0007669"/>
    <property type="project" value="UniProtKB-SubCell"/>
</dbReference>
<dbReference type="GO" id="GO:0051259">
    <property type="term" value="P:protein complex oligomerization"/>
    <property type="evidence" value="ECO:0007669"/>
    <property type="project" value="InterPro"/>
</dbReference>
<dbReference type="GO" id="GO:0006457">
    <property type="term" value="P:protein folding"/>
    <property type="evidence" value="ECO:0007669"/>
    <property type="project" value="UniProtKB-UniRule"/>
</dbReference>
<dbReference type="Gene3D" id="1.20.120.1820">
    <property type="match status" value="1"/>
</dbReference>
<dbReference type="Gene3D" id="1.20.1280.20">
    <property type="entry name" value="HscB, C-terminal domain"/>
    <property type="match status" value="1"/>
</dbReference>
<dbReference type="HAMAP" id="MF_01150">
    <property type="entry name" value="TorD"/>
    <property type="match status" value="1"/>
</dbReference>
<dbReference type="InterPro" id="IPR023069">
    <property type="entry name" value="Chaperone_TorD"/>
</dbReference>
<dbReference type="InterPro" id="IPR020945">
    <property type="entry name" value="DMSO/NO3_reduct_chaperone"/>
</dbReference>
<dbReference type="InterPro" id="IPR036386">
    <property type="entry name" value="HscB_C_sf"/>
</dbReference>
<dbReference type="InterPro" id="IPR036411">
    <property type="entry name" value="TorD-like_sf"/>
</dbReference>
<dbReference type="InterPro" id="IPR050289">
    <property type="entry name" value="TorD/DmsD_chaperones"/>
</dbReference>
<dbReference type="NCBIfam" id="NF003442">
    <property type="entry name" value="PRK04976.1"/>
    <property type="match status" value="1"/>
</dbReference>
<dbReference type="PANTHER" id="PTHR34227:SF11">
    <property type="entry name" value="CHAPERONE PROTEIN TORD"/>
    <property type="match status" value="1"/>
</dbReference>
<dbReference type="PANTHER" id="PTHR34227">
    <property type="entry name" value="CHAPERONE PROTEIN YCDY"/>
    <property type="match status" value="1"/>
</dbReference>
<dbReference type="Pfam" id="PF02613">
    <property type="entry name" value="Nitrate_red_del"/>
    <property type="match status" value="1"/>
</dbReference>
<dbReference type="SUPFAM" id="SSF89155">
    <property type="entry name" value="TorD-like"/>
    <property type="match status" value="1"/>
</dbReference>
<accession>Q8DAQ4</accession>
<reference key="1">
    <citation type="submission" date="2002-12" db="EMBL/GenBank/DDBJ databases">
        <title>Complete genome sequence of Vibrio vulnificus CMCP6.</title>
        <authorList>
            <person name="Rhee J.H."/>
            <person name="Kim S.Y."/>
            <person name="Chung S.S."/>
            <person name="Kim J.J."/>
            <person name="Moon Y.H."/>
            <person name="Jeong H."/>
            <person name="Choy H.E."/>
        </authorList>
    </citation>
    <scope>NUCLEOTIDE SEQUENCE [LARGE SCALE GENOMIC DNA]</scope>
    <source>
        <strain>CMCP6</strain>
    </source>
</reference>
<reference key="2">
    <citation type="journal article" date="2011" name="Mol. Syst. Biol.">
        <title>Integrative genome-scale metabolic analysis of Vibrio vulnificus for drug targeting and discovery.</title>
        <authorList>
            <person name="Kim H.U."/>
            <person name="Kim S.Y."/>
            <person name="Jeong H."/>
            <person name="Kim T.Y."/>
            <person name="Kim J.J."/>
            <person name="Choy H.E."/>
            <person name="Yi K.Y."/>
            <person name="Rhee J.H."/>
            <person name="Lee S.Y."/>
        </authorList>
    </citation>
    <scope>SEQUENCE REVISION</scope>
    <source>
        <strain>CMCP6</strain>
    </source>
</reference>
<protein>
    <recommendedName>
        <fullName evidence="1">Chaperone protein TorD</fullName>
    </recommendedName>
</protein>
<comment type="function">
    <text evidence="1">Involved in the biogenesis of TorA. Acts on TorA before the insertion of the molybdenum cofactor and, as a result, probably favors a conformation of the apoenzyme that is competent for acquiring the cofactor.</text>
</comment>
<comment type="subcellular location">
    <subcellularLocation>
        <location evidence="1">Cytoplasm</location>
    </subcellularLocation>
</comment>
<comment type="similarity">
    <text evidence="1">Belongs to the TorD/DmsD family. TorD subfamily.</text>
</comment>
<sequence length="215" mass="24760">MMQEIKAFNEKRAEIYWWLSSLFAKELTQEELDKYQSMEIRAFLTGLAENDALRPSVNAFVDALNRLVDRQDAQLELAADFCDLFLKTAKHGALPYASIYLTKDGLLNGEPAQKMDAWLKKHGVQVNQQLNEPADHLAIMLDFLGNLIIRSNEFEQDRHMEEAFIEQNAFIQEMLLSWLPSFSQRAAEYDEFGFYNSAIKLLVAFCMLDSDYLVG</sequence>
<organism>
    <name type="scientific">Vibrio vulnificus (strain CMCP6)</name>
    <dbReference type="NCBI Taxonomy" id="216895"/>
    <lineage>
        <taxon>Bacteria</taxon>
        <taxon>Pseudomonadati</taxon>
        <taxon>Pseudomonadota</taxon>
        <taxon>Gammaproteobacteria</taxon>
        <taxon>Vibrionales</taxon>
        <taxon>Vibrionaceae</taxon>
        <taxon>Vibrio</taxon>
    </lineage>
</organism>
<name>TORD_VIBVU</name>
<feature type="chain" id="PRO_0000211647" description="Chaperone protein TorD">
    <location>
        <begin position="1"/>
        <end position="215"/>
    </location>
</feature>
<keyword id="KW-0143">Chaperone</keyword>
<keyword id="KW-0963">Cytoplasm</keyword>
<proteinExistence type="inferred from homology"/>